<protein>
    <recommendedName>
        <fullName evidence="1">Ketol-acid reductoisomerase (NADP(+)) 1</fullName>
        <shortName evidence="1">KARI 1</shortName>
        <ecNumber evidence="1">1.1.1.86</ecNumber>
    </recommendedName>
    <alternativeName>
        <fullName evidence="1">Acetohydroxy-acid isomeroreductase 1</fullName>
        <shortName evidence="1">AHIR 1</shortName>
    </alternativeName>
    <alternativeName>
        <fullName evidence="1">Alpha-keto-beta-hydroxylacyl reductoisomerase 1</fullName>
    </alternativeName>
    <alternativeName>
        <fullName evidence="1">Ketol-acid reductoisomerase type 1</fullName>
    </alternativeName>
    <alternativeName>
        <fullName evidence="1">Ketol-acid reductoisomerase type I</fullName>
    </alternativeName>
</protein>
<proteinExistence type="inferred from homology"/>
<comment type="function">
    <text evidence="1">Involved in the biosynthesis of branched-chain amino acids (BCAA). Catalyzes an alkyl-migration followed by a ketol-acid reduction of (S)-2-acetolactate (S2AL) to yield (R)-2,3-dihydroxy-isovalerate. In the isomerase reaction, S2AL is rearranged via a Mg-dependent methyl migration to produce 3-hydroxy-3-methyl-2-ketobutyrate (HMKB). In the reductase reaction, this 2-ketoacid undergoes a metal-dependent reduction by NADPH to yield (R)-2,3-dihydroxy-isovalerate.</text>
</comment>
<comment type="catalytic activity">
    <reaction evidence="1">
        <text>(2R)-2,3-dihydroxy-3-methylbutanoate + NADP(+) = (2S)-2-acetolactate + NADPH + H(+)</text>
        <dbReference type="Rhea" id="RHEA:22068"/>
        <dbReference type="ChEBI" id="CHEBI:15378"/>
        <dbReference type="ChEBI" id="CHEBI:49072"/>
        <dbReference type="ChEBI" id="CHEBI:57783"/>
        <dbReference type="ChEBI" id="CHEBI:58349"/>
        <dbReference type="ChEBI" id="CHEBI:58476"/>
        <dbReference type="EC" id="1.1.1.86"/>
    </reaction>
</comment>
<comment type="catalytic activity">
    <reaction evidence="1">
        <text>(2R,3R)-2,3-dihydroxy-3-methylpentanoate + NADP(+) = (S)-2-ethyl-2-hydroxy-3-oxobutanoate + NADPH + H(+)</text>
        <dbReference type="Rhea" id="RHEA:13493"/>
        <dbReference type="ChEBI" id="CHEBI:15378"/>
        <dbReference type="ChEBI" id="CHEBI:49256"/>
        <dbReference type="ChEBI" id="CHEBI:49258"/>
        <dbReference type="ChEBI" id="CHEBI:57783"/>
        <dbReference type="ChEBI" id="CHEBI:58349"/>
        <dbReference type="EC" id="1.1.1.86"/>
    </reaction>
</comment>
<comment type="cofactor">
    <cofactor evidence="1">
        <name>Mg(2+)</name>
        <dbReference type="ChEBI" id="CHEBI:18420"/>
    </cofactor>
    <text evidence="1">Binds 2 magnesium ions per subunit.</text>
</comment>
<comment type="pathway">
    <text evidence="1">Amino-acid biosynthesis; L-isoleucine biosynthesis; L-isoleucine from 2-oxobutanoate: step 2/4.</text>
</comment>
<comment type="pathway">
    <text evidence="1">Amino-acid biosynthesis; L-valine biosynthesis; L-valine from pyruvate: step 2/4.</text>
</comment>
<comment type="similarity">
    <text evidence="1">Belongs to the ketol-acid reductoisomerase family.</text>
</comment>
<dbReference type="EC" id="1.1.1.86" evidence="1"/>
<dbReference type="EMBL" id="AE016879">
    <property type="protein sequence ID" value="AAP25362.1"/>
    <property type="molecule type" value="Genomic_DNA"/>
</dbReference>
<dbReference type="EMBL" id="AE017334">
    <property type="protein sequence ID" value="AAT30515.1"/>
    <property type="molecule type" value="Genomic_DNA"/>
</dbReference>
<dbReference type="EMBL" id="AE017225">
    <property type="protein sequence ID" value="AAT53630.1"/>
    <property type="molecule type" value="Genomic_DNA"/>
</dbReference>
<dbReference type="RefSeq" id="NP_843876.1">
    <property type="nucleotide sequence ID" value="NC_003997.3"/>
</dbReference>
<dbReference type="RefSeq" id="YP_027579.1">
    <property type="nucleotide sequence ID" value="NC_005945.1"/>
</dbReference>
<dbReference type="SMR" id="Q81T69"/>
<dbReference type="STRING" id="261594.GBAA_1419"/>
<dbReference type="DNASU" id="1084747"/>
<dbReference type="GeneID" id="45021398"/>
<dbReference type="KEGG" id="ban:BA_1419"/>
<dbReference type="KEGG" id="banh:HYU01_07195"/>
<dbReference type="KEGG" id="bar:GBAA_1419"/>
<dbReference type="KEGG" id="bat:BAS1310"/>
<dbReference type="PATRIC" id="fig|1392.230.peg.1377"/>
<dbReference type="eggNOG" id="COG0059">
    <property type="taxonomic scope" value="Bacteria"/>
</dbReference>
<dbReference type="HOGENOM" id="CLU_033821_0_1_9"/>
<dbReference type="OMA" id="RAMFSWL"/>
<dbReference type="OrthoDB" id="9804088at2"/>
<dbReference type="UniPathway" id="UPA00047">
    <property type="reaction ID" value="UER00056"/>
</dbReference>
<dbReference type="UniPathway" id="UPA00049">
    <property type="reaction ID" value="UER00060"/>
</dbReference>
<dbReference type="Proteomes" id="UP000000427">
    <property type="component" value="Chromosome"/>
</dbReference>
<dbReference type="Proteomes" id="UP000000594">
    <property type="component" value="Chromosome"/>
</dbReference>
<dbReference type="GO" id="GO:0005829">
    <property type="term" value="C:cytosol"/>
    <property type="evidence" value="ECO:0007669"/>
    <property type="project" value="TreeGrafter"/>
</dbReference>
<dbReference type="GO" id="GO:0004455">
    <property type="term" value="F:ketol-acid reductoisomerase activity"/>
    <property type="evidence" value="ECO:0007669"/>
    <property type="project" value="UniProtKB-UniRule"/>
</dbReference>
<dbReference type="GO" id="GO:0000287">
    <property type="term" value="F:magnesium ion binding"/>
    <property type="evidence" value="ECO:0007669"/>
    <property type="project" value="UniProtKB-UniRule"/>
</dbReference>
<dbReference type="GO" id="GO:0050661">
    <property type="term" value="F:NADP binding"/>
    <property type="evidence" value="ECO:0007669"/>
    <property type="project" value="InterPro"/>
</dbReference>
<dbReference type="GO" id="GO:0009097">
    <property type="term" value="P:isoleucine biosynthetic process"/>
    <property type="evidence" value="ECO:0007669"/>
    <property type="project" value="UniProtKB-UniRule"/>
</dbReference>
<dbReference type="GO" id="GO:0009099">
    <property type="term" value="P:L-valine biosynthetic process"/>
    <property type="evidence" value="ECO:0007669"/>
    <property type="project" value="UniProtKB-UniRule"/>
</dbReference>
<dbReference type="FunFam" id="3.40.50.720:FF:000023">
    <property type="entry name" value="Ketol-acid reductoisomerase (NADP(+))"/>
    <property type="match status" value="1"/>
</dbReference>
<dbReference type="Gene3D" id="6.10.240.10">
    <property type="match status" value="1"/>
</dbReference>
<dbReference type="Gene3D" id="3.40.50.720">
    <property type="entry name" value="NAD(P)-binding Rossmann-like Domain"/>
    <property type="match status" value="1"/>
</dbReference>
<dbReference type="HAMAP" id="MF_00435">
    <property type="entry name" value="IlvC"/>
    <property type="match status" value="1"/>
</dbReference>
<dbReference type="InterPro" id="IPR008927">
    <property type="entry name" value="6-PGluconate_DH-like_C_sf"/>
</dbReference>
<dbReference type="InterPro" id="IPR013023">
    <property type="entry name" value="KARI"/>
</dbReference>
<dbReference type="InterPro" id="IPR000506">
    <property type="entry name" value="KARI_C"/>
</dbReference>
<dbReference type="InterPro" id="IPR013116">
    <property type="entry name" value="KARI_N"/>
</dbReference>
<dbReference type="InterPro" id="IPR014359">
    <property type="entry name" value="KARI_prok"/>
</dbReference>
<dbReference type="InterPro" id="IPR036291">
    <property type="entry name" value="NAD(P)-bd_dom_sf"/>
</dbReference>
<dbReference type="NCBIfam" id="TIGR00465">
    <property type="entry name" value="ilvC"/>
    <property type="match status" value="1"/>
</dbReference>
<dbReference type="NCBIfam" id="NF004017">
    <property type="entry name" value="PRK05479.1"/>
    <property type="match status" value="1"/>
</dbReference>
<dbReference type="NCBIfam" id="NF009940">
    <property type="entry name" value="PRK13403.1"/>
    <property type="match status" value="1"/>
</dbReference>
<dbReference type="PANTHER" id="PTHR21371">
    <property type="entry name" value="KETOL-ACID REDUCTOISOMERASE, MITOCHONDRIAL"/>
    <property type="match status" value="1"/>
</dbReference>
<dbReference type="PANTHER" id="PTHR21371:SF1">
    <property type="entry name" value="KETOL-ACID REDUCTOISOMERASE, MITOCHONDRIAL"/>
    <property type="match status" value="1"/>
</dbReference>
<dbReference type="Pfam" id="PF01450">
    <property type="entry name" value="KARI_C"/>
    <property type="match status" value="1"/>
</dbReference>
<dbReference type="Pfam" id="PF07991">
    <property type="entry name" value="KARI_N"/>
    <property type="match status" value="1"/>
</dbReference>
<dbReference type="PIRSF" id="PIRSF000116">
    <property type="entry name" value="IlvC_gammaproteo"/>
    <property type="match status" value="1"/>
</dbReference>
<dbReference type="SUPFAM" id="SSF48179">
    <property type="entry name" value="6-phosphogluconate dehydrogenase C-terminal domain-like"/>
    <property type="match status" value="1"/>
</dbReference>
<dbReference type="SUPFAM" id="SSF51735">
    <property type="entry name" value="NAD(P)-binding Rossmann-fold domains"/>
    <property type="match status" value="1"/>
</dbReference>
<dbReference type="PROSITE" id="PS51851">
    <property type="entry name" value="KARI_C"/>
    <property type="match status" value="1"/>
</dbReference>
<dbReference type="PROSITE" id="PS51850">
    <property type="entry name" value="KARI_N"/>
    <property type="match status" value="1"/>
</dbReference>
<sequence length="336" mass="36693">MAKVYYEKDVTVNVLKEKKVAIIGYGSQGHAHAQNLRDNGFDVVVGLRKGKSWDKAKEDGFSVYTVAEAAKQADVVMILLPDELQPEVYEEEIAPNLQAGNSLVFAHGFNVHFDQVKPPVNVDVFLVAPKGPGHLVRRTFSEGGAVPALFAVYQDATGVATEKALSYADGIGATRAGVLETTFKEETETDLFGEQAVLCGGVTALVKAGFETLVDAGYQPELAYFECLHELKLIVDLMYEGGLENMRYSVSDTAQWGDFVSGPRVVTEDTKKAMGTVLAEIQDGTFARGWIAEHKAGKPNFYATNEKENEHEIEVVGRKLRGMMPFVQPRVKAGVK</sequence>
<feature type="chain" id="PRO_0000151270" description="Ketol-acid reductoisomerase (NADP(+)) 1">
    <location>
        <begin position="1"/>
        <end position="336"/>
    </location>
</feature>
<feature type="domain" description="KARI N-terminal Rossmann" evidence="2">
    <location>
        <begin position="2"/>
        <end position="181"/>
    </location>
</feature>
<feature type="domain" description="KARI C-terminal knotted" evidence="3">
    <location>
        <begin position="182"/>
        <end position="327"/>
    </location>
</feature>
<feature type="active site" evidence="1">
    <location>
        <position position="107"/>
    </location>
</feature>
<feature type="binding site" evidence="1">
    <location>
        <begin position="25"/>
        <end position="28"/>
    </location>
    <ligand>
        <name>NADP(+)</name>
        <dbReference type="ChEBI" id="CHEBI:58349"/>
    </ligand>
</feature>
<feature type="binding site" evidence="1">
    <location>
        <position position="48"/>
    </location>
    <ligand>
        <name>NADP(+)</name>
        <dbReference type="ChEBI" id="CHEBI:58349"/>
    </ligand>
</feature>
<feature type="binding site" evidence="1">
    <location>
        <position position="52"/>
    </location>
    <ligand>
        <name>NADP(+)</name>
        <dbReference type="ChEBI" id="CHEBI:58349"/>
    </ligand>
</feature>
<feature type="binding site" evidence="1">
    <location>
        <begin position="82"/>
        <end position="85"/>
    </location>
    <ligand>
        <name>NADP(+)</name>
        <dbReference type="ChEBI" id="CHEBI:58349"/>
    </ligand>
</feature>
<feature type="binding site" evidence="1">
    <location>
        <position position="133"/>
    </location>
    <ligand>
        <name>NADP(+)</name>
        <dbReference type="ChEBI" id="CHEBI:58349"/>
    </ligand>
</feature>
<feature type="binding site" evidence="1">
    <location>
        <position position="190"/>
    </location>
    <ligand>
        <name>Mg(2+)</name>
        <dbReference type="ChEBI" id="CHEBI:18420"/>
        <label>1</label>
    </ligand>
</feature>
<feature type="binding site" evidence="1">
    <location>
        <position position="190"/>
    </location>
    <ligand>
        <name>Mg(2+)</name>
        <dbReference type="ChEBI" id="CHEBI:18420"/>
        <label>2</label>
    </ligand>
</feature>
<feature type="binding site" evidence="1">
    <location>
        <position position="194"/>
    </location>
    <ligand>
        <name>Mg(2+)</name>
        <dbReference type="ChEBI" id="CHEBI:18420"/>
        <label>1</label>
    </ligand>
</feature>
<feature type="binding site" evidence="1">
    <location>
        <position position="226"/>
    </location>
    <ligand>
        <name>Mg(2+)</name>
        <dbReference type="ChEBI" id="CHEBI:18420"/>
        <label>2</label>
    </ligand>
</feature>
<feature type="binding site" evidence="1">
    <location>
        <position position="230"/>
    </location>
    <ligand>
        <name>Mg(2+)</name>
        <dbReference type="ChEBI" id="CHEBI:18420"/>
        <label>2</label>
    </ligand>
</feature>
<feature type="binding site" evidence="1">
    <location>
        <position position="251"/>
    </location>
    <ligand>
        <name>substrate</name>
    </ligand>
</feature>
<reference key="1">
    <citation type="journal article" date="2003" name="Nature">
        <title>The genome sequence of Bacillus anthracis Ames and comparison to closely related bacteria.</title>
        <authorList>
            <person name="Read T.D."/>
            <person name="Peterson S.N."/>
            <person name="Tourasse N.J."/>
            <person name="Baillie L.W."/>
            <person name="Paulsen I.T."/>
            <person name="Nelson K.E."/>
            <person name="Tettelin H."/>
            <person name="Fouts D.E."/>
            <person name="Eisen J.A."/>
            <person name="Gill S.R."/>
            <person name="Holtzapple E.K."/>
            <person name="Okstad O.A."/>
            <person name="Helgason E."/>
            <person name="Rilstone J."/>
            <person name="Wu M."/>
            <person name="Kolonay J.F."/>
            <person name="Beanan M.J."/>
            <person name="Dodson R.J."/>
            <person name="Brinkac L.M."/>
            <person name="Gwinn M.L."/>
            <person name="DeBoy R.T."/>
            <person name="Madpu R."/>
            <person name="Daugherty S.C."/>
            <person name="Durkin A.S."/>
            <person name="Haft D.H."/>
            <person name="Nelson W.C."/>
            <person name="Peterson J.D."/>
            <person name="Pop M."/>
            <person name="Khouri H.M."/>
            <person name="Radune D."/>
            <person name="Benton J.L."/>
            <person name="Mahamoud Y."/>
            <person name="Jiang L."/>
            <person name="Hance I.R."/>
            <person name="Weidman J.F."/>
            <person name="Berry K.J."/>
            <person name="Plaut R.D."/>
            <person name="Wolf A.M."/>
            <person name="Watkins K.L."/>
            <person name="Nierman W.C."/>
            <person name="Hazen A."/>
            <person name="Cline R.T."/>
            <person name="Redmond C."/>
            <person name="Thwaite J.E."/>
            <person name="White O."/>
            <person name="Salzberg S.L."/>
            <person name="Thomason B."/>
            <person name="Friedlander A.M."/>
            <person name="Koehler T.M."/>
            <person name="Hanna P.C."/>
            <person name="Kolstoe A.-B."/>
            <person name="Fraser C.M."/>
        </authorList>
    </citation>
    <scope>NUCLEOTIDE SEQUENCE [LARGE SCALE GENOMIC DNA]</scope>
    <source>
        <strain>Ames / isolate Porton</strain>
    </source>
</reference>
<reference key="2">
    <citation type="journal article" date="2009" name="J. Bacteriol.">
        <title>The complete genome sequence of Bacillus anthracis Ames 'Ancestor'.</title>
        <authorList>
            <person name="Ravel J."/>
            <person name="Jiang L."/>
            <person name="Stanley S.T."/>
            <person name="Wilson M.R."/>
            <person name="Decker R.S."/>
            <person name="Read T.D."/>
            <person name="Worsham P."/>
            <person name="Keim P.S."/>
            <person name="Salzberg S.L."/>
            <person name="Fraser-Liggett C.M."/>
            <person name="Rasko D.A."/>
        </authorList>
    </citation>
    <scope>NUCLEOTIDE SEQUENCE [LARGE SCALE GENOMIC DNA]</scope>
    <source>
        <strain>Ames ancestor</strain>
    </source>
</reference>
<reference key="3">
    <citation type="submission" date="2004-01" db="EMBL/GenBank/DDBJ databases">
        <title>Complete genome sequence of Bacillus anthracis Sterne.</title>
        <authorList>
            <person name="Brettin T.S."/>
            <person name="Bruce D."/>
            <person name="Challacombe J.F."/>
            <person name="Gilna P."/>
            <person name="Han C."/>
            <person name="Hill K."/>
            <person name="Hitchcock P."/>
            <person name="Jackson P."/>
            <person name="Keim P."/>
            <person name="Longmire J."/>
            <person name="Lucas S."/>
            <person name="Okinaka R."/>
            <person name="Richardson P."/>
            <person name="Rubin E."/>
            <person name="Tice H."/>
        </authorList>
    </citation>
    <scope>NUCLEOTIDE SEQUENCE [LARGE SCALE GENOMIC DNA]</scope>
    <source>
        <strain>Sterne</strain>
    </source>
</reference>
<name>ILVC1_BACAN</name>
<organism>
    <name type="scientific">Bacillus anthracis</name>
    <dbReference type="NCBI Taxonomy" id="1392"/>
    <lineage>
        <taxon>Bacteria</taxon>
        <taxon>Bacillati</taxon>
        <taxon>Bacillota</taxon>
        <taxon>Bacilli</taxon>
        <taxon>Bacillales</taxon>
        <taxon>Bacillaceae</taxon>
        <taxon>Bacillus</taxon>
        <taxon>Bacillus cereus group</taxon>
    </lineage>
</organism>
<accession>Q81T69</accession>
<accession>Q6I1F2</accession>
<accession>Q6KV98</accession>
<evidence type="ECO:0000255" key="1">
    <source>
        <dbReference type="HAMAP-Rule" id="MF_00435"/>
    </source>
</evidence>
<evidence type="ECO:0000255" key="2">
    <source>
        <dbReference type="PROSITE-ProRule" id="PRU01197"/>
    </source>
</evidence>
<evidence type="ECO:0000255" key="3">
    <source>
        <dbReference type="PROSITE-ProRule" id="PRU01198"/>
    </source>
</evidence>
<keyword id="KW-0028">Amino-acid biosynthesis</keyword>
<keyword id="KW-0100">Branched-chain amino acid biosynthesis</keyword>
<keyword id="KW-0460">Magnesium</keyword>
<keyword id="KW-0479">Metal-binding</keyword>
<keyword id="KW-0521">NADP</keyword>
<keyword id="KW-0560">Oxidoreductase</keyword>
<keyword id="KW-1185">Reference proteome</keyword>
<gene>
    <name evidence="1" type="primary">ilvC1</name>
    <name type="synonym">ilvC-1</name>
    <name type="ordered locus">BA_1419</name>
    <name type="ordered locus">GBAA_1419</name>
    <name type="ordered locus">BAS1310</name>
</gene>